<gene>
    <name evidence="1 2" type="primary">psbA1</name>
    <name type="ordered locus">Syncc9605_0307</name>
</gene>
<gene>
    <name evidence="1 2" type="primary">psbA2</name>
    <name type="ordered locus">Syncc9605_0519</name>
</gene>
<reference key="1">
    <citation type="submission" date="2005-07" db="EMBL/GenBank/DDBJ databases">
        <title>Complete sequence of Synechococcus sp. CC9605.</title>
        <authorList>
            <consortium name="US DOE Joint Genome Institute"/>
            <person name="Copeland A."/>
            <person name="Lucas S."/>
            <person name="Lapidus A."/>
            <person name="Barry K."/>
            <person name="Detter J.C."/>
            <person name="Glavina T."/>
            <person name="Hammon N."/>
            <person name="Israni S."/>
            <person name="Pitluck S."/>
            <person name="Schmutz J."/>
            <person name="Martinez M."/>
            <person name="Larimer F."/>
            <person name="Land M."/>
            <person name="Kyrpides N."/>
            <person name="Ivanova N."/>
            <person name="Richardson P."/>
        </authorList>
    </citation>
    <scope>NUCLEOTIDE SEQUENCE [LARGE SCALE GENOMIC DNA]</scope>
    <source>
        <strain>CC9605</strain>
    </source>
</reference>
<name>PSBA1_SYNSC</name>
<organism>
    <name type="scientific">Synechococcus sp. (strain CC9605)</name>
    <dbReference type="NCBI Taxonomy" id="110662"/>
    <lineage>
        <taxon>Bacteria</taxon>
        <taxon>Bacillati</taxon>
        <taxon>Cyanobacteriota</taxon>
        <taxon>Cyanophyceae</taxon>
        <taxon>Synechococcales</taxon>
        <taxon>Synechococcaceae</taxon>
        <taxon>Synechococcus</taxon>
    </lineage>
</organism>
<protein>
    <recommendedName>
        <fullName evidence="1">Photosystem II protein D1 1</fullName>
        <shortName evidence="1">PSII D1 protein 1</shortName>
        <ecNumber evidence="1">1.10.3.9</ecNumber>
    </recommendedName>
    <alternativeName>
        <fullName evidence="1">Photosystem II Q(B) protein 1</fullName>
    </alternativeName>
</protein>
<comment type="function">
    <text evidence="1">Photosystem II (PSII) is a light-driven water:plastoquinone oxidoreductase that uses light energy to abstract electrons from H(2)O, generating O(2) and a proton gradient subsequently used for ATP formation. It consists of a core antenna complex that captures photons, and an electron transfer chain that converts photonic excitation into a charge separation. The D1/D2 (PsbA/PsbD) reaction center heterodimer binds P680, the primary electron donor of PSII as well as several subsequent electron acceptors.</text>
</comment>
<comment type="catalytic activity">
    <reaction evidence="1">
        <text>2 a plastoquinone + 4 hnu + 2 H2O = 2 a plastoquinol + O2</text>
        <dbReference type="Rhea" id="RHEA:36359"/>
        <dbReference type="Rhea" id="RHEA-COMP:9561"/>
        <dbReference type="Rhea" id="RHEA-COMP:9562"/>
        <dbReference type="ChEBI" id="CHEBI:15377"/>
        <dbReference type="ChEBI" id="CHEBI:15379"/>
        <dbReference type="ChEBI" id="CHEBI:17757"/>
        <dbReference type="ChEBI" id="CHEBI:30212"/>
        <dbReference type="ChEBI" id="CHEBI:62192"/>
        <dbReference type="EC" id="1.10.3.9"/>
    </reaction>
</comment>
<comment type="cofactor">
    <text evidence="1">The D1/D2 heterodimer binds P680, chlorophylls that are the primary electron donor of PSII, and subsequent electron acceptors. It shares a non-heme iron and each subunit binds pheophytin, quinone, additional chlorophylls, carotenoids and lipids. D1 provides most of the ligands for the Mn4-Ca-O5 cluster of the oxygen-evolving complex (OEC). There is also a Cl(-1) ion associated with D1 and D2, which is required for oxygen evolution. The PSII complex binds additional chlorophylls, carotenoids and specific lipids.</text>
</comment>
<comment type="subunit">
    <text evidence="1">PSII is composed of 1 copy each of membrane proteins PsbA, PsbB, PsbC, PsbD, PsbE, PsbF, PsbH, PsbI, PsbJ, PsbK, PsbL, PsbM, PsbT, PsbX, PsbY, PsbZ, Psb30/Ycf12, peripheral proteins PsbO, CyanoQ (PsbQ), PsbU, PsbV and a large number of cofactors. It forms dimeric complexes.</text>
</comment>
<comment type="subcellular location">
    <subcellularLocation>
        <location evidence="1">Cellular thylakoid membrane</location>
        <topology evidence="1">Multi-pass membrane protein</topology>
    </subcellularLocation>
</comment>
<comment type="PTM">
    <text evidence="1">Tyr-161 forms a radical intermediate that is referred to as redox-active TyrZ, YZ or Y-Z.</text>
</comment>
<comment type="PTM">
    <text evidence="1">C-terminally processed by CtpA; processing is essential to allow assembly of the oxygen-evolving complex and thus photosynthetic growth.</text>
</comment>
<comment type="miscellaneous">
    <text evidence="1">Cyanobacteria usually contain more than 2 copies of the psbA gene.</text>
</comment>
<comment type="miscellaneous">
    <text evidence="1">2 of the reaction center chlorophylls (ChlD1 and ChlD2) are entirely coordinated by water.</text>
</comment>
<comment type="miscellaneous">
    <text evidence="1">Herbicides such as atrazine, BNT, diuron or ioxynil bind in the Q(B) binding site and block subsequent electron transfer.</text>
</comment>
<comment type="similarity">
    <text evidence="1">Belongs to the reaction center PufL/M/PsbA/D family.</text>
</comment>
<accession>Q3AM89</accession>
<evidence type="ECO:0000255" key="1">
    <source>
        <dbReference type="HAMAP-Rule" id="MF_01379"/>
    </source>
</evidence>
<evidence type="ECO:0000305" key="2"/>
<proteinExistence type="inferred from homology"/>
<dbReference type="EC" id="1.10.3.9" evidence="1"/>
<dbReference type="EMBL" id="CP000110">
    <property type="protein sequence ID" value="ABB34083.1"/>
    <property type="molecule type" value="Genomic_DNA"/>
</dbReference>
<dbReference type="EMBL" id="CP000110">
    <property type="protein sequence ID" value="ABB34293.1"/>
    <property type="molecule type" value="Genomic_DNA"/>
</dbReference>
<dbReference type="SMR" id="Q3AM89"/>
<dbReference type="STRING" id="110662.Syncc9605_0307"/>
<dbReference type="KEGG" id="syd:Syncc9605_0307"/>
<dbReference type="KEGG" id="syd:Syncc9605_0519"/>
<dbReference type="eggNOG" id="ENOG502Z87P">
    <property type="taxonomic scope" value="Bacteria"/>
</dbReference>
<dbReference type="HOGENOM" id="CLU_054206_1_0_3"/>
<dbReference type="OrthoDB" id="505356at2"/>
<dbReference type="GO" id="GO:0009523">
    <property type="term" value="C:photosystem II"/>
    <property type="evidence" value="ECO:0007669"/>
    <property type="project" value="UniProtKB-KW"/>
</dbReference>
<dbReference type="GO" id="GO:0031676">
    <property type="term" value="C:plasma membrane-derived thylakoid membrane"/>
    <property type="evidence" value="ECO:0007669"/>
    <property type="project" value="UniProtKB-SubCell"/>
</dbReference>
<dbReference type="GO" id="GO:0016168">
    <property type="term" value="F:chlorophyll binding"/>
    <property type="evidence" value="ECO:0007669"/>
    <property type="project" value="UniProtKB-UniRule"/>
</dbReference>
<dbReference type="GO" id="GO:0045156">
    <property type="term" value="F:electron transporter, transferring electrons within the cyclic electron transport pathway of photosynthesis activity"/>
    <property type="evidence" value="ECO:0007669"/>
    <property type="project" value="InterPro"/>
</dbReference>
<dbReference type="GO" id="GO:0005506">
    <property type="term" value="F:iron ion binding"/>
    <property type="evidence" value="ECO:0007669"/>
    <property type="project" value="UniProtKB-UniRule"/>
</dbReference>
<dbReference type="GO" id="GO:0016682">
    <property type="term" value="F:oxidoreductase activity, acting on diphenols and related substances as donors, oxygen as acceptor"/>
    <property type="evidence" value="ECO:0007669"/>
    <property type="project" value="UniProtKB-UniRule"/>
</dbReference>
<dbReference type="GO" id="GO:0010242">
    <property type="term" value="F:oxygen evolving activity"/>
    <property type="evidence" value="ECO:0007669"/>
    <property type="project" value="UniProtKB-EC"/>
</dbReference>
<dbReference type="GO" id="GO:0009772">
    <property type="term" value="P:photosynthetic electron transport in photosystem II"/>
    <property type="evidence" value="ECO:0007669"/>
    <property type="project" value="InterPro"/>
</dbReference>
<dbReference type="GO" id="GO:0009635">
    <property type="term" value="P:response to herbicide"/>
    <property type="evidence" value="ECO:0007669"/>
    <property type="project" value="UniProtKB-KW"/>
</dbReference>
<dbReference type="FunFam" id="1.20.85.10:FF:000002">
    <property type="entry name" value="Photosystem II protein D1"/>
    <property type="match status" value="1"/>
</dbReference>
<dbReference type="Gene3D" id="1.20.85.10">
    <property type="entry name" value="Photosystem II protein D1-like"/>
    <property type="match status" value="1"/>
</dbReference>
<dbReference type="HAMAP" id="MF_01379">
    <property type="entry name" value="PSII_PsbA_D1"/>
    <property type="match status" value="1"/>
</dbReference>
<dbReference type="InterPro" id="IPR055266">
    <property type="entry name" value="D1/D2"/>
</dbReference>
<dbReference type="InterPro" id="IPR036854">
    <property type="entry name" value="Photo_II_D1/D2_sf"/>
</dbReference>
<dbReference type="InterPro" id="IPR000484">
    <property type="entry name" value="Photo_RC_L/M"/>
</dbReference>
<dbReference type="InterPro" id="IPR055265">
    <property type="entry name" value="Photo_RC_L/M_CS"/>
</dbReference>
<dbReference type="InterPro" id="IPR005867">
    <property type="entry name" value="PSII_D1"/>
</dbReference>
<dbReference type="NCBIfam" id="TIGR01151">
    <property type="entry name" value="psbA"/>
    <property type="match status" value="1"/>
</dbReference>
<dbReference type="PANTHER" id="PTHR33149:SF12">
    <property type="entry name" value="PHOTOSYSTEM II D2 PROTEIN"/>
    <property type="match status" value="1"/>
</dbReference>
<dbReference type="PANTHER" id="PTHR33149">
    <property type="entry name" value="PHOTOSYSTEM II PROTEIN D1"/>
    <property type="match status" value="1"/>
</dbReference>
<dbReference type="Pfam" id="PF00124">
    <property type="entry name" value="Photo_RC"/>
    <property type="match status" value="1"/>
</dbReference>
<dbReference type="PRINTS" id="PR00256">
    <property type="entry name" value="REACTNCENTRE"/>
</dbReference>
<dbReference type="SUPFAM" id="SSF81483">
    <property type="entry name" value="Bacterial photosystem II reaction centre, L and M subunits"/>
    <property type="match status" value="1"/>
</dbReference>
<dbReference type="PROSITE" id="PS00244">
    <property type="entry name" value="REACTION_CENTER"/>
    <property type="match status" value="1"/>
</dbReference>
<feature type="chain" id="PRO_0000316392" description="Photosystem II protein D1 1" evidence="1">
    <location>
        <begin position="1"/>
        <end position="344"/>
    </location>
</feature>
<feature type="propeptide" id="PRO_0000316393" evidence="1">
    <location>
        <begin position="345"/>
        <end position="359"/>
    </location>
</feature>
<feature type="transmembrane region" description="Helical" evidence="1">
    <location>
        <begin position="29"/>
        <end position="46"/>
    </location>
</feature>
<feature type="transmembrane region" description="Helical" evidence="1">
    <location>
        <begin position="118"/>
        <end position="133"/>
    </location>
</feature>
<feature type="transmembrane region" description="Helical" evidence="1">
    <location>
        <begin position="142"/>
        <end position="156"/>
    </location>
</feature>
<feature type="transmembrane region" description="Helical" evidence="1">
    <location>
        <begin position="197"/>
        <end position="218"/>
    </location>
</feature>
<feature type="transmembrane region" description="Helical" evidence="1">
    <location>
        <begin position="274"/>
        <end position="288"/>
    </location>
</feature>
<feature type="binding site" description="axial binding residue" evidence="1">
    <location>
        <position position="118"/>
    </location>
    <ligand>
        <name>chlorophyll a</name>
        <dbReference type="ChEBI" id="CHEBI:58416"/>
        <label>ChlzD1</label>
    </ligand>
    <ligandPart>
        <name>Mg</name>
        <dbReference type="ChEBI" id="CHEBI:25107"/>
    </ligandPart>
</feature>
<feature type="binding site" evidence="1">
    <location>
        <position position="126"/>
    </location>
    <ligand>
        <name>pheophytin a</name>
        <dbReference type="ChEBI" id="CHEBI:136840"/>
        <label>D1</label>
    </ligand>
</feature>
<feature type="binding site" evidence="1">
    <location>
        <position position="170"/>
    </location>
    <ligand>
        <name>[CaMn4O5] cluster</name>
        <dbReference type="ChEBI" id="CHEBI:189552"/>
    </ligand>
</feature>
<feature type="binding site" evidence="1">
    <location>
        <position position="189"/>
    </location>
    <ligand>
        <name>[CaMn4O5] cluster</name>
        <dbReference type="ChEBI" id="CHEBI:189552"/>
    </ligand>
</feature>
<feature type="binding site" description="axial binding residue" evidence="1">
    <location>
        <position position="198"/>
    </location>
    <ligand>
        <name>chlorophyll a</name>
        <dbReference type="ChEBI" id="CHEBI:58416"/>
        <label>PD1</label>
    </ligand>
    <ligandPart>
        <name>Mg</name>
        <dbReference type="ChEBI" id="CHEBI:25107"/>
    </ligandPart>
</feature>
<feature type="binding site" evidence="1">
    <location>
        <position position="215"/>
    </location>
    <ligand>
        <name>a quinone</name>
        <dbReference type="ChEBI" id="CHEBI:132124"/>
        <label>B</label>
    </ligand>
</feature>
<feature type="binding site" evidence="1">
    <location>
        <position position="215"/>
    </location>
    <ligand>
        <name>Fe cation</name>
        <dbReference type="ChEBI" id="CHEBI:24875"/>
        <note>ligand shared with heterodimeric partner</note>
    </ligand>
</feature>
<feature type="binding site" evidence="1">
    <location>
        <begin position="264"/>
        <end position="265"/>
    </location>
    <ligand>
        <name>a quinone</name>
        <dbReference type="ChEBI" id="CHEBI:132124"/>
        <label>B</label>
    </ligand>
</feature>
<feature type="binding site" evidence="1">
    <location>
        <position position="272"/>
    </location>
    <ligand>
        <name>Fe cation</name>
        <dbReference type="ChEBI" id="CHEBI:24875"/>
        <note>ligand shared with heterodimeric partner</note>
    </ligand>
</feature>
<feature type="binding site" evidence="1">
    <location>
        <position position="332"/>
    </location>
    <ligand>
        <name>[CaMn4O5] cluster</name>
        <dbReference type="ChEBI" id="CHEBI:189552"/>
    </ligand>
</feature>
<feature type="binding site" evidence="1">
    <location>
        <position position="333"/>
    </location>
    <ligand>
        <name>[CaMn4O5] cluster</name>
        <dbReference type="ChEBI" id="CHEBI:189552"/>
    </ligand>
</feature>
<feature type="binding site" evidence="1">
    <location>
        <position position="342"/>
    </location>
    <ligand>
        <name>[CaMn4O5] cluster</name>
        <dbReference type="ChEBI" id="CHEBI:189552"/>
    </ligand>
</feature>
<feature type="binding site" evidence="1">
    <location>
        <position position="344"/>
    </location>
    <ligand>
        <name>[CaMn4O5] cluster</name>
        <dbReference type="ChEBI" id="CHEBI:189552"/>
    </ligand>
</feature>
<feature type="site" description="Tyrosine radical intermediate" evidence="1">
    <location>
        <position position="161"/>
    </location>
</feature>
<feature type="site" description="Stabilizes free radical intermediate" evidence="1">
    <location>
        <position position="190"/>
    </location>
</feature>
<feature type="site" description="Cleavage; by CtpA" evidence="1">
    <location>
        <begin position="344"/>
        <end position="345"/>
    </location>
</feature>
<sequence length="359" mass="39345">MTTTLQQRSGASSWQAFCEWVTSTNNRLYVGWFGVLMIPTLLAATICFVIAFVAAPPVDIDGIREPVAGSLIYGNNIISGAVVPSSNAIGLHFYPIWEAASLDEWLYNGGPFQLVVFHFLIGIYAYMGREWELSYRLGMRPWICVAYSAPVAAASAVFLVYPFGQGSFSDAMPLGISGTFNYMLVFQAEHNILMHPFHMLGVAGVFGGSLFSAMHGSLVTSSLVRETTESESQNYGYKFGQEEETYNIVAAHGYFGRLIFQYASFNNSRSLHFFLAAWPVVGIWFTALGVSTMAFNLNGFNFNQSILDGQGRVLNTWADVLNRAGLGMEVMHERNAHNFPLDLAAAESTPVALQAPAIG</sequence>
<keyword id="KW-0106">Calcium</keyword>
<keyword id="KW-0148">Chlorophyll</keyword>
<keyword id="KW-0157">Chromophore</keyword>
<keyword id="KW-0249">Electron transport</keyword>
<keyword id="KW-0359">Herbicide resistance</keyword>
<keyword id="KW-0408">Iron</keyword>
<keyword id="KW-0460">Magnesium</keyword>
<keyword id="KW-0464">Manganese</keyword>
<keyword id="KW-0472">Membrane</keyword>
<keyword id="KW-0479">Metal-binding</keyword>
<keyword id="KW-0560">Oxidoreductase</keyword>
<keyword id="KW-0602">Photosynthesis</keyword>
<keyword id="KW-0604">Photosystem II</keyword>
<keyword id="KW-0793">Thylakoid</keyword>
<keyword id="KW-0812">Transmembrane</keyword>
<keyword id="KW-1133">Transmembrane helix</keyword>
<keyword id="KW-0813">Transport</keyword>